<feature type="signal peptide" evidence="3">
    <location>
        <begin position="1"/>
        <end position="19"/>
    </location>
</feature>
<feature type="chain" id="PRO_5000061700" description="Pheromone-binding protein Gp-9" evidence="3">
    <location>
        <begin position="20"/>
        <end position="153"/>
    </location>
</feature>
<feature type="disulfide bond" evidence="2">
    <location>
        <begin position="37"/>
        <end position="77"/>
    </location>
</feature>
<feature type="disulfide bond" evidence="2">
    <location>
        <begin position="73"/>
        <end position="129"/>
    </location>
</feature>
<feature type="disulfide bond" evidence="2">
    <location>
        <begin position="118"/>
        <end position="138"/>
    </location>
</feature>
<feature type="sequence variant" description="In strain: R5-R/c." evidence="6">
    <original>S</original>
    <variation>N</variation>
    <location>
        <position position="23"/>
    </location>
</feature>
<feature type="sequence variant" description="In allele b'." evidence="5">
    <original>K</original>
    <variation>R</variation>
    <location>
        <position position="25"/>
    </location>
</feature>
<feature type="sequence variant" description="In allele b'." evidence="5">
    <original>S</original>
    <variation>G</variation>
    <location>
        <position position="42"/>
    </location>
</feature>
<feature type="sequence variant" description="In allele b'." evidence="5">
    <original>M</original>
    <variation>I</variation>
    <location>
        <position position="95"/>
    </location>
</feature>
<feature type="sequence variant" description="In allele b'." evidence="5">
    <original>A</original>
    <variation>V</variation>
    <location>
        <position position="117"/>
    </location>
</feature>
<feature type="sequence variant" description="In allele b'." evidence="5">
    <original>H</original>
    <variation>Q</variation>
    <location>
        <position position="120"/>
    </location>
</feature>
<feature type="sequence variant" description="In allele b'." evidence="5">
    <original>V</original>
    <variation>I</variation>
    <location>
        <position position="139"/>
    </location>
</feature>
<proteinExistence type="inferred from homology"/>
<reference evidence="7 8" key="1">
    <citation type="journal article" date="2002" name="Science">
        <title>Identification of a major gene regulating complex social behavior.</title>
        <authorList>
            <person name="Krieger M.J.B."/>
            <person name="Ross K.G."/>
        </authorList>
    </citation>
    <scope>NUCLEOTIDE SEQUENCE [GENOMIC DNA] (ALLELE B AND B')</scope>
</reference>
<reference evidence="7 9" key="2">
    <citation type="journal article" date="2005" name="Mol. Biol. Evol.">
        <title>Molecular evolutionary analyses of the odorant-binding protein gene Gp-9 in fire ants and other Solenopsis species.</title>
        <authorList>
            <person name="Krieger M.J.B."/>
            <person name="Ross K.G."/>
        </authorList>
    </citation>
    <scope>NUCLEOTIDE SEQUENCE [GENOMIC DNA] (ALLELE B2)</scope>
</reference>
<reference evidence="7 13" key="3">
    <citation type="journal article" date="2007" name="PLoS ONE">
        <title>Molecular variation at a candidate gene implicated in the regulation of fire ant social behavior.</title>
        <authorList>
            <person name="Gotzek D."/>
            <person name="Shoemaker D.D."/>
            <person name="Ross K.G."/>
        </authorList>
    </citation>
    <scope>NUCLEOTIDE SEQUENCE [GENOMIC DNA]</scope>
    <scope>VARIANT ASN-23</scope>
    <source>
        <strain evidence="14">Pu-13/o</strain>
        <strain evidence="11">Pu-13p/c</strain>
        <strain evidence="10">Pu-72c</strain>
        <strain evidence="12">Pu-77c</strain>
        <strain evidence="13">R5-R/c</strain>
    </source>
</reference>
<sequence length="153" mass="16858">MKTFVLHIFIFALVAFASASRDSAKKIGSQYDNYATCLTEHSLTEDDIFSIGEVSSGQHKTNHEDTELHKNGCVMQCLLEKDGLMSGADYDEEKMREDYIKETGAQPGDQRIEALNACMHETKDMEDKCDKSLLLVACVLAAEAVLADSNEGA</sequence>
<accession>A9LKF0</accession>
<accession>Q8WRP8</accession>
<accession>Q8WRP9</accession>
<dbReference type="EMBL" id="AF427903">
    <property type="protein sequence ID" value="AAL51129.1"/>
    <property type="molecule type" value="Genomic_DNA"/>
</dbReference>
<dbReference type="EMBL" id="AF427904">
    <property type="protein sequence ID" value="AAL51130.1"/>
    <property type="molecule type" value="Genomic_DNA"/>
</dbReference>
<dbReference type="EMBL" id="AY818628">
    <property type="protein sequence ID" value="AAW80695.1"/>
    <property type="molecule type" value="Genomic_DNA"/>
</dbReference>
<dbReference type="EMBL" id="EU220046">
    <property type="protein sequence ID" value="ABX25625.1"/>
    <property type="molecule type" value="Genomic_DNA"/>
</dbReference>
<dbReference type="EMBL" id="EU220047">
    <property type="protein sequence ID" value="ABX25626.1"/>
    <property type="molecule type" value="Genomic_DNA"/>
</dbReference>
<dbReference type="EMBL" id="EU220048">
    <property type="protein sequence ID" value="ABX25627.1"/>
    <property type="molecule type" value="Genomic_DNA"/>
</dbReference>
<dbReference type="EMBL" id="EU220049">
    <property type="protein sequence ID" value="ABX25628.1"/>
    <property type="molecule type" value="Genomic_DNA"/>
</dbReference>
<dbReference type="EMBL" id="EU220050">
    <property type="protein sequence ID" value="ABX25629.1"/>
    <property type="molecule type" value="Genomic_DNA"/>
</dbReference>
<dbReference type="SMR" id="A9LKF0"/>
<dbReference type="GO" id="GO:0005615">
    <property type="term" value="C:extracellular space"/>
    <property type="evidence" value="ECO:0000250"/>
    <property type="project" value="UniProtKB"/>
</dbReference>
<dbReference type="GO" id="GO:0005550">
    <property type="term" value="F:pheromone binding"/>
    <property type="evidence" value="ECO:0007669"/>
    <property type="project" value="UniProtKB-KW"/>
</dbReference>
<dbReference type="GO" id="GO:0019236">
    <property type="term" value="P:response to pheromone"/>
    <property type="evidence" value="ECO:0007669"/>
    <property type="project" value="UniProtKB-KW"/>
</dbReference>
<dbReference type="GO" id="GO:0035176">
    <property type="term" value="P:social behavior"/>
    <property type="evidence" value="ECO:0000250"/>
    <property type="project" value="UniProtKB"/>
</dbReference>
<dbReference type="CDD" id="cd23992">
    <property type="entry name" value="PBP_GOBP"/>
    <property type="match status" value="1"/>
</dbReference>
<dbReference type="FunFam" id="1.10.238.20:FF:000004">
    <property type="entry name" value="Pheromone-binding protein Gp-9"/>
    <property type="match status" value="1"/>
</dbReference>
<dbReference type="Gene3D" id="1.10.238.20">
    <property type="entry name" value="Pheromone/general odorant binding protein domain"/>
    <property type="match status" value="1"/>
</dbReference>
<dbReference type="InterPro" id="IPR006170">
    <property type="entry name" value="PBP/GOBP"/>
</dbReference>
<dbReference type="InterPro" id="IPR036728">
    <property type="entry name" value="PBP_GOBP_sf"/>
</dbReference>
<dbReference type="InterPro" id="IPR022354">
    <property type="entry name" value="Pheromone-bd_protein_Gp-9"/>
</dbReference>
<dbReference type="Pfam" id="PF01395">
    <property type="entry name" value="PBP_GOBP"/>
    <property type="match status" value="1"/>
</dbReference>
<dbReference type="PRINTS" id="PR02007">
    <property type="entry name" value="ODORANTBPGP9"/>
</dbReference>
<dbReference type="SUPFAM" id="SSF47565">
    <property type="entry name" value="Insect pheromone/odorant-binding proteins"/>
    <property type="match status" value="1"/>
</dbReference>
<name>PBGP9_SOLRI</name>
<protein>
    <recommendedName>
        <fullName>Pheromone-binding protein Gp-9</fullName>
        <shortName>PBP</shortName>
    </recommendedName>
    <alternativeName>
        <fullName>Putative odorant-binding protein Gp-9</fullName>
    </alternativeName>
</protein>
<comment type="function">
    <text evidence="3">Colony queen number, a major feature of social organization, is associated with worker genotype for Gp-9. Colonies are headed by either a single reproductive queen (monogyne form) or multiple queens (polygyne form). Differences in worker Gp-9 genotypes between social forms may cause differences in workers' abilities to recognize queens and regulate their numbers (By similarity).</text>
</comment>
<comment type="subunit">
    <text evidence="2">Homodimer.</text>
</comment>
<comment type="subcellular location">
    <subcellularLocation>
        <location evidence="1">Secreted</location>
    </subcellularLocation>
</comment>
<comment type="polymorphism">
    <text evidence="5">Allele B is shown, polygyne population from Argentina and allele B2, monogyne population from Brazil.</text>
</comment>
<comment type="similarity">
    <text evidence="4">Belongs to the PBP/GOBP family.</text>
</comment>
<keyword id="KW-0085">Behavior</keyword>
<keyword id="KW-1015">Disulfide bond</keyword>
<keyword id="KW-0589">Pheromone response</keyword>
<keyword id="KW-0590">Pheromone-binding</keyword>
<keyword id="KW-0964">Secreted</keyword>
<keyword id="KW-0732">Signal</keyword>
<keyword id="KW-0813">Transport</keyword>
<evidence type="ECO:0000250" key="1"/>
<evidence type="ECO:0000250" key="2">
    <source>
        <dbReference type="UniProtKB" id="P20797"/>
    </source>
</evidence>
<evidence type="ECO:0000250" key="3">
    <source>
        <dbReference type="UniProtKB" id="Q8WP90"/>
    </source>
</evidence>
<evidence type="ECO:0000255" key="4"/>
<evidence type="ECO:0000269" key="5">
    <source>
    </source>
</evidence>
<evidence type="ECO:0000269" key="6">
    <source>
    </source>
</evidence>
<evidence type="ECO:0000305" key="7"/>
<evidence type="ECO:0000312" key="8">
    <source>
        <dbReference type="EMBL" id="AAL51130.1"/>
    </source>
</evidence>
<evidence type="ECO:0000312" key="9">
    <source>
        <dbReference type="EMBL" id="AAW80695.1"/>
    </source>
</evidence>
<evidence type="ECO:0000312" key="10">
    <source>
        <dbReference type="EMBL" id="ABX25625.1"/>
    </source>
</evidence>
<evidence type="ECO:0000312" key="11">
    <source>
        <dbReference type="EMBL" id="ABX25626.1"/>
    </source>
</evidence>
<evidence type="ECO:0000312" key="12">
    <source>
        <dbReference type="EMBL" id="ABX25627.1"/>
    </source>
</evidence>
<evidence type="ECO:0000312" key="13">
    <source>
        <dbReference type="EMBL" id="ABX25628.1"/>
    </source>
</evidence>
<evidence type="ECO:0000312" key="14">
    <source>
        <dbReference type="EMBL" id="ABX25629.1"/>
    </source>
</evidence>
<organism>
    <name type="scientific">Solenopsis richteri</name>
    <name type="common">Black imported fire ant</name>
    <dbReference type="NCBI Taxonomy" id="30203"/>
    <lineage>
        <taxon>Eukaryota</taxon>
        <taxon>Metazoa</taxon>
        <taxon>Ecdysozoa</taxon>
        <taxon>Arthropoda</taxon>
        <taxon>Hexapoda</taxon>
        <taxon>Insecta</taxon>
        <taxon>Pterygota</taxon>
        <taxon>Neoptera</taxon>
        <taxon>Endopterygota</taxon>
        <taxon>Hymenoptera</taxon>
        <taxon>Apocrita</taxon>
        <taxon>Aculeata</taxon>
        <taxon>Formicoidea</taxon>
        <taxon>Formicidae</taxon>
        <taxon>Myrmicinae</taxon>
        <taxon>Solenopsis</taxon>
    </lineage>
</organism>
<gene>
    <name evidence="8" type="primary">Gp-9</name>
</gene>